<organism>
    <name type="scientific">Homo sapiens</name>
    <name type="common">Human</name>
    <dbReference type="NCBI Taxonomy" id="9606"/>
    <lineage>
        <taxon>Eukaryota</taxon>
        <taxon>Metazoa</taxon>
        <taxon>Chordata</taxon>
        <taxon>Craniata</taxon>
        <taxon>Vertebrata</taxon>
        <taxon>Euteleostomi</taxon>
        <taxon>Mammalia</taxon>
        <taxon>Eutheria</taxon>
        <taxon>Euarchontoglires</taxon>
        <taxon>Primates</taxon>
        <taxon>Haplorrhini</taxon>
        <taxon>Catarrhini</taxon>
        <taxon>Hominidae</taxon>
        <taxon>Homo</taxon>
    </lineage>
</organism>
<sequence length="139" mass="15994">MIIFQDLISHNEMFSDIYKIWEITNGLCLEVEQKMLSKTTGNTDDSLIGRNSSSESTEDEVTESTIITSVDIVTNHHLQESIFTKEAYKKYIKDYMKSINEKLEEQRPERVKLFITGMKNKSSTSLLIFKTTSSLLVKT</sequence>
<keyword id="KW-0053">Apoptosis</keyword>
<keyword id="KW-1267">Proteomics identification</keyword>
<keyword id="KW-1185">Reference proteome</keyword>
<proteinExistence type="uncertain"/>
<evidence type="ECO:0000255" key="1">
    <source>
        <dbReference type="PROSITE-ProRule" id="PRU01133"/>
    </source>
</evidence>
<evidence type="ECO:0000256" key="2">
    <source>
        <dbReference type="SAM" id="MobiDB-lite"/>
    </source>
</evidence>
<evidence type="ECO:0000305" key="3"/>
<feature type="chain" id="PRO_0000211312" description="Putative translationally-controlled tumor protein-like protein TPT1P8">
    <location>
        <begin position="1"/>
        <end position="139"/>
    </location>
</feature>
<feature type="domain" description="TCTP" evidence="1">
    <location>
        <begin position="1"/>
        <end position="139"/>
    </location>
</feature>
<feature type="region of interest" description="Disordered" evidence="2">
    <location>
        <begin position="40"/>
        <end position="60"/>
    </location>
</feature>
<feature type="compositionally biased region" description="Polar residues" evidence="2">
    <location>
        <begin position="40"/>
        <end position="51"/>
    </location>
</feature>
<reference key="1">
    <citation type="submission" date="2000-08" db="EMBL/GenBank/DDBJ databases">
        <title>Cloning and characterization of FKSG2, a novel inhibitor of apoptosis.</title>
        <authorList>
            <person name="Wang Y.-G."/>
        </authorList>
    </citation>
    <scope>NUCLEOTIDE SEQUENCE [MRNA]</scope>
</reference>
<reference key="2">
    <citation type="journal article" date="2006" name="Nature">
        <title>DNA sequence and analysis of human chromosome 8.</title>
        <authorList>
            <person name="Nusbaum C."/>
            <person name="Mikkelsen T.S."/>
            <person name="Zody M.C."/>
            <person name="Asakawa S."/>
            <person name="Taudien S."/>
            <person name="Garber M."/>
            <person name="Kodira C.D."/>
            <person name="Schueler M.G."/>
            <person name="Shimizu A."/>
            <person name="Whittaker C.A."/>
            <person name="Chang J.L."/>
            <person name="Cuomo C.A."/>
            <person name="Dewar K."/>
            <person name="FitzGerald M.G."/>
            <person name="Yang X."/>
            <person name="Allen N.R."/>
            <person name="Anderson S."/>
            <person name="Asakawa T."/>
            <person name="Blechschmidt K."/>
            <person name="Bloom T."/>
            <person name="Borowsky M.L."/>
            <person name="Butler J."/>
            <person name="Cook A."/>
            <person name="Corum B."/>
            <person name="DeArellano K."/>
            <person name="DeCaprio D."/>
            <person name="Dooley K.T."/>
            <person name="Dorris L. III"/>
            <person name="Engels R."/>
            <person name="Gloeckner G."/>
            <person name="Hafez N."/>
            <person name="Hagopian D.S."/>
            <person name="Hall J.L."/>
            <person name="Ishikawa S.K."/>
            <person name="Jaffe D.B."/>
            <person name="Kamat A."/>
            <person name="Kudoh J."/>
            <person name="Lehmann R."/>
            <person name="Lokitsang T."/>
            <person name="Macdonald P."/>
            <person name="Major J.E."/>
            <person name="Matthews C.D."/>
            <person name="Mauceli E."/>
            <person name="Menzel U."/>
            <person name="Mihalev A.H."/>
            <person name="Minoshima S."/>
            <person name="Murayama Y."/>
            <person name="Naylor J.W."/>
            <person name="Nicol R."/>
            <person name="Nguyen C."/>
            <person name="O'Leary S.B."/>
            <person name="O'Neill K."/>
            <person name="Parker S.C.J."/>
            <person name="Polley A."/>
            <person name="Raymond C.K."/>
            <person name="Reichwald K."/>
            <person name="Rodriguez J."/>
            <person name="Sasaki T."/>
            <person name="Schilhabel M."/>
            <person name="Siddiqui R."/>
            <person name="Smith C.L."/>
            <person name="Sneddon T.P."/>
            <person name="Talamas J.A."/>
            <person name="Tenzin P."/>
            <person name="Topham K."/>
            <person name="Venkataraman V."/>
            <person name="Wen G."/>
            <person name="Yamazaki S."/>
            <person name="Young S.K."/>
            <person name="Zeng Q."/>
            <person name="Zimmer A.R."/>
            <person name="Rosenthal A."/>
            <person name="Birren B.W."/>
            <person name="Platzer M."/>
            <person name="Shimizu N."/>
            <person name="Lander E.S."/>
        </authorList>
    </citation>
    <scope>NUCLEOTIDE SEQUENCE [LARGE SCALE GENOMIC DNA]</scope>
</reference>
<gene>
    <name type="primary">TPT1P8</name>
    <name type="ORF">FKSG2</name>
</gene>
<comment type="similarity">
    <text evidence="1">Belongs to the TCTP family.</text>
</comment>
<comment type="caution">
    <text evidence="3">Could be the product of a pseudogene.</text>
</comment>
<comment type="sequence caution" evidence="3">
    <conflict type="frameshift">
        <sequence resource="EMBL-CDS" id="AAG17927"/>
    </conflict>
</comment>
<name>TCTP8_HUMAN</name>
<protein>
    <recommendedName>
        <fullName>Putative translationally-controlled tumor protein-like protein TPT1P8</fullName>
    </recommendedName>
    <alternativeName>
        <fullName>Putative apoptosis inhibitor FKSG2</fullName>
    </alternativeName>
</protein>
<dbReference type="EMBL" id="AF300871">
    <property type="protein sequence ID" value="AAG17927.1"/>
    <property type="status" value="ALT_FRAME"/>
    <property type="molecule type" value="mRNA"/>
</dbReference>
<dbReference type="EMBL" id="AC138136">
    <property type="status" value="NOT_ANNOTATED_CDS"/>
    <property type="molecule type" value="Genomic_DNA"/>
</dbReference>
<dbReference type="SMR" id="Q9HAU6"/>
<dbReference type="FunCoup" id="Q9HAU6">
    <property type="interactions" value="398"/>
</dbReference>
<dbReference type="iPTMnet" id="Q9HAU6"/>
<dbReference type="PhosphoSitePlus" id="Q9HAU6"/>
<dbReference type="BioMuta" id="HGNC:24088"/>
<dbReference type="DMDM" id="527504045"/>
<dbReference type="jPOST" id="Q9HAU6"/>
<dbReference type="MassIVE" id="Q9HAU6"/>
<dbReference type="ProteomicsDB" id="81442"/>
<dbReference type="AGR" id="HGNC:24088"/>
<dbReference type="GeneCards" id="TPT1P8"/>
<dbReference type="HGNC" id="HGNC:24088">
    <property type="gene designation" value="TPT1P8"/>
</dbReference>
<dbReference type="neXtProt" id="NX_Q9HAU6"/>
<dbReference type="InParanoid" id="Q9HAU6"/>
<dbReference type="PAN-GO" id="Q9HAU6">
    <property type="GO annotations" value="2 GO annotations based on evolutionary models"/>
</dbReference>
<dbReference type="PathwayCommons" id="Q9HAU6"/>
<dbReference type="Pharos" id="Q9HAU6">
    <property type="development level" value="Tdark"/>
</dbReference>
<dbReference type="Proteomes" id="UP000005640">
    <property type="component" value="Unplaced"/>
</dbReference>
<dbReference type="RNAct" id="Q9HAU6">
    <property type="molecule type" value="protein"/>
</dbReference>
<dbReference type="GO" id="GO:0005737">
    <property type="term" value="C:cytoplasm"/>
    <property type="evidence" value="ECO:0000318"/>
    <property type="project" value="GO_Central"/>
</dbReference>
<dbReference type="GO" id="GO:0005509">
    <property type="term" value="F:calcium ion binding"/>
    <property type="evidence" value="ECO:0000318"/>
    <property type="project" value="GO_Central"/>
</dbReference>
<dbReference type="GO" id="GO:0006915">
    <property type="term" value="P:apoptotic process"/>
    <property type="evidence" value="ECO:0007669"/>
    <property type="project" value="UniProtKB-KW"/>
</dbReference>
<dbReference type="Gene3D" id="2.170.150.10">
    <property type="entry name" value="Metal Binding Protein, Guanine Nucleotide Exchange Factor, Chain A"/>
    <property type="match status" value="1"/>
</dbReference>
<dbReference type="InterPro" id="IPR011057">
    <property type="entry name" value="Mss4-like_sf"/>
</dbReference>
<dbReference type="InterPro" id="IPR011323">
    <property type="entry name" value="Mss4/transl-control_tumour"/>
</dbReference>
<dbReference type="InterPro" id="IPR034737">
    <property type="entry name" value="TCTP"/>
</dbReference>
<dbReference type="InterPro" id="IPR018105">
    <property type="entry name" value="Translational_control_tumour_p"/>
</dbReference>
<dbReference type="PANTHER" id="PTHR11991">
    <property type="entry name" value="TRANSLATIONALLY CONTROLLED TUMOR PROTEIN-RELATED"/>
    <property type="match status" value="1"/>
</dbReference>
<dbReference type="PANTHER" id="PTHR11991:SF12">
    <property type="entry name" value="TRANSLATIONALLY-CONTROLLED TUMOR PROTEIN-LIKE PROTEIN TPT1P8-RELATED"/>
    <property type="match status" value="1"/>
</dbReference>
<dbReference type="Pfam" id="PF00838">
    <property type="entry name" value="TCTP"/>
    <property type="match status" value="1"/>
</dbReference>
<dbReference type="PRINTS" id="PR01653">
    <property type="entry name" value="TCTPROTEIN"/>
</dbReference>
<dbReference type="SUPFAM" id="SSF51316">
    <property type="entry name" value="Mss4-like"/>
    <property type="match status" value="1"/>
</dbReference>
<dbReference type="PROSITE" id="PS51797">
    <property type="entry name" value="TCTP_3"/>
    <property type="match status" value="1"/>
</dbReference>
<accession>Q9HAU6</accession>